<name>Y2652_LEPCP</name>
<keyword id="KW-1185">Reference proteome</keyword>
<comment type="similarity">
    <text evidence="1">Belongs to the UPF0246 family.</text>
</comment>
<organism>
    <name type="scientific">Leptothrix cholodnii (strain ATCC 51168 / LMG 8142 / SP-6)</name>
    <name type="common">Leptothrix discophora (strain SP-6)</name>
    <dbReference type="NCBI Taxonomy" id="395495"/>
    <lineage>
        <taxon>Bacteria</taxon>
        <taxon>Pseudomonadati</taxon>
        <taxon>Pseudomonadota</taxon>
        <taxon>Betaproteobacteria</taxon>
        <taxon>Burkholderiales</taxon>
        <taxon>Sphaerotilaceae</taxon>
        <taxon>Leptothrix</taxon>
    </lineage>
</organism>
<sequence length="257" mass="28739">MLFLLSPAKSLDYQTPTRVAATEPLYTRQAADLIEILRTKTPVEVAELMDLSDALAGLNVARYAAWQPQADRHNSKPAVLAFNGDVYDGLDARTLATPDLRWAQSHLVILSGLYGALRPLDALQPYRLEMGTRLANPQGPDLYAWWGDTVSDYLNERQSGEPHPVVVNLASQEYFKVVRRGVLKARVVDCVFEDWKGGVYKIISFHAKRARGLMARYAITQRIRRVADLQGFDLAGYAYAPAVSGPDRLVFRRHPAD</sequence>
<dbReference type="EMBL" id="CP001013">
    <property type="protein sequence ID" value="ACB34917.1"/>
    <property type="molecule type" value="Genomic_DNA"/>
</dbReference>
<dbReference type="RefSeq" id="WP_012347673.1">
    <property type="nucleotide sequence ID" value="NC_010524.1"/>
</dbReference>
<dbReference type="SMR" id="B1Y847"/>
<dbReference type="STRING" id="395495.Lcho_2652"/>
<dbReference type="KEGG" id="lch:Lcho_2652"/>
<dbReference type="eggNOG" id="COG3022">
    <property type="taxonomic scope" value="Bacteria"/>
</dbReference>
<dbReference type="HOGENOM" id="CLU_061989_0_0_4"/>
<dbReference type="OrthoDB" id="9777133at2"/>
<dbReference type="Proteomes" id="UP000001693">
    <property type="component" value="Chromosome"/>
</dbReference>
<dbReference type="GO" id="GO:0005829">
    <property type="term" value="C:cytosol"/>
    <property type="evidence" value="ECO:0007669"/>
    <property type="project" value="TreeGrafter"/>
</dbReference>
<dbReference type="GO" id="GO:0033194">
    <property type="term" value="P:response to hydroperoxide"/>
    <property type="evidence" value="ECO:0007669"/>
    <property type="project" value="TreeGrafter"/>
</dbReference>
<dbReference type="HAMAP" id="MF_00652">
    <property type="entry name" value="UPF0246"/>
    <property type="match status" value="1"/>
</dbReference>
<dbReference type="InterPro" id="IPR005583">
    <property type="entry name" value="YaaA"/>
</dbReference>
<dbReference type="NCBIfam" id="NF002542">
    <property type="entry name" value="PRK02101.1-3"/>
    <property type="match status" value="1"/>
</dbReference>
<dbReference type="PANTHER" id="PTHR30283:SF4">
    <property type="entry name" value="PEROXIDE STRESS RESISTANCE PROTEIN YAAA"/>
    <property type="match status" value="1"/>
</dbReference>
<dbReference type="PANTHER" id="PTHR30283">
    <property type="entry name" value="PEROXIDE STRESS RESPONSE PROTEIN YAAA"/>
    <property type="match status" value="1"/>
</dbReference>
<dbReference type="Pfam" id="PF03883">
    <property type="entry name" value="H2O2_YaaD"/>
    <property type="match status" value="1"/>
</dbReference>
<evidence type="ECO:0000255" key="1">
    <source>
        <dbReference type="HAMAP-Rule" id="MF_00652"/>
    </source>
</evidence>
<accession>B1Y847</accession>
<proteinExistence type="inferred from homology"/>
<protein>
    <recommendedName>
        <fullName evidence="1">UPF0246 protein Lcho_2652</fullName>
    </recommendedName>
</protein>
<feature type="chain" id="PRO_1000131128" description="UPF0246 protein Lcho_2652">
    <location>
        <begin position="1"/>
        <end position="257"/>
    </location>
</feature>
<reference key="1">
    <citation type="submission" date="2008-03" db="EMBL/GenBank/DDBJ databases">
        <title>Complete sequence of Leptothrix cholodnii SP-6.</title>
        <authorList>
            <consortium name="US DOE Joint Genome Institute"/>
            <person name="Copeland A."/>
            <person name="Lucas S."/>
            <person name="Lapidus A."/>
            <person name="Glavina del Rio T."/>
            <person name="Dalin E."/>
            <person name="Tice H."/>
            <person name="Bruce D."/>
            <person name="Goodwin L."/>
            <person name="Pitluck S."/>
            <person name="Chertkov O."/>
            <person name="Brettin T."/>
            <person name="Detter J.C."/>
            <person name="Han C."/>
            <person name="Kuske C.R."/>
            <person name="Schmutz J."/>
            <person name="Larimer F."/>
            <person name="Land M."/>
            <person name="Hauser L."/>
            <person name="Kyrpides N."/>
            <person name="Lykidis A."/>
            <person name="Emerson D."/>
            <person name="Richardson P."/>
        </authorList>
    </citation>
    <scope>NUCLEOTIDE SEQUENCE [LARGE SCALE GENOMIC DNA]</scope>
    <source>
        <strain>ATCC 51168 / LMG 8142 / SP-6</strain>
    </source>
</reference>
<gene>
    <name type="ordered locus">Lcho_2652</name>
</gene>